<name>EXOC7_DANRE</name>
<proteinExistence type="inferred from homology"/>
<comment type="function">
    <text evidence="3 6">Component of the exocyst complex involved in the docking of exocytic vesicles with fusion sites on the plasma membrane (By similarity). It is required for neuron survival and plays an essential role in telencephalon development (PubMed:32103185).</text>
</comment>
<comment type="subcellular location">
    <subcellularLocation>
        <location evidence="1">Cytoplasm</location>
        <location evidence="1">Cytosol</location>
    </subcellularLocation>
    <subcellularLocation>
        <location evidence="1">Cell membrane</location>
        <topology evidence="1">Peripheral membrane protein</topology>
    </subcellularLocation>
    <subcellularLocation>
        <location evidence="3">Midbody</location>
        <location evidence="3">Midbody ring</location>
    </subcellularLocation>
</comment>
<comment type="domain">
    <text evidence="3">The C-terminus is required for translocation to the plasma membrane.</text>
</comment>
<comment type="similarity">
    <text evidence="7">Belongs to the EXO70 family.</text>
</comment>
<evidence type="ECO:0000250" key="1">
    <source>
        <dbReference type="UniProtKB" id="O35250"/>
    </source>
</evidence>
<evidence type="ECO:0000250" key="2">
    <source>
        <dbReference type="UniProtKB" id="O54922"/>
    </source>
</evidence>
<evidence type="ECO:0000250" key="3">
    <source>
        <dbReference type="UniProtKB" id="Q9UPT5"/>
    </source>
</evidence>
<evidence type="ECO:0000255" key="4"/>
<evidence type="ECO:0000256" key="5">
    <source>
        <dbReference type="SAM" id="MobiDB-lite"/>
    </source>
</evidence>
<evidence type="ECO:0000269" key="6">
    <source>
    </source>
</evidence>
<evidence type="ECO:0000305" key="7"/>
<feature type="chain" id="PRO_0000453462" description="Exocyst complex component 7">
    <location>
        <begin position="1"/>
        <end position="720"/>
    </location>
</feature>
<feature type="region of interest" description="Disordered" evidence="5">
    <location>
        <begin position="249"/>
        <end position="268"/>
    </location>
</feature>
<feature type="coiled-coil region" evidence="4">
    <location>
        <begin position="5"/>
        <end position="34"/>
    </location>
</feature>
<feature type="coiled-coil region" evidence="4">
    <location>
        <begin position="63"/>
        <end position="83"/>
    </location>
</feature>
<feature type="modified residue" description="Phosphoserine" evidence="2">
    <location>
        <position position="133"/>
    </location>
</feature>
<dbReference type="EMBL" id="FP102121">
    <property type="status" value="NOT_ANNOTATED_CDS"/>
    <property type="molecule type" value="Genomic_DNA"/>
</dbReference>
<dbReference type="RefSeq" id="XP_009305253.1">
    <property type="nucleotide sequence ID" value="XM_009306978.2"/>
</dbReference>
<dbReference type="SMR" id="E7FC72"/>
<dbReference type="FunCoup" id="E7FC72">
    <property type="interactions" value="2120"/>
</dbReference>
<dbReference type="PaxDb" id="7955-ENSDARP00000106414"/>
<dbReference type="PeptideAtlas" id="E7FC72"/>
<dbReference type="Ensembl" id="ENSDART00000123834">
    <property type="protein sequence ID" value="ENSDARP00000106414"/>
    <property type="gene ID" value="ENSDARG00000087229"/>
</dbReference>
<dbReference type="eggNOG" id="KOG2344">
    <property type="taxonomic scope" value="Eukaryota"/>
</dbReference>
<dbReference type="InParanoid" id="E7FC72"/>
<dbReference type="OMA" id="GIIRAGP"/>
<dbReference type="TreeFam" id="TF324243"/>
<dbReference type="PRO" id="PR:E7FC72"/>
<dbReference type="Proteomes" id="UP000000437">
    <property type="component" value="Unplaced"/>
</dbReference>
<dbReference type="Bgee" id="ENSDARG00000087229">
    <property type="expression patterns" value="Expressed in testis and 28 other cell types or tissues"/>
</dbReference>
<dbReference type="ExpressionAtlas" id="E7FC72">
    <property type="expression patterns" value="baseline and differential"/>
</dbReference>
<dbReference type="GO" id="GO:0005829">
    <property type="term" value="C:cytosol"/>
    <property type="evidence" value="ECO:0007669"/>
    <property type="project" value="UniProtKB-SubCell"/>
</dbReference>
<dbReference type="GO" id="GO:0000145">
    <property type="term" value="C:exocyst"/>
    <property type="evidence" value="ECO:0007669"/>
    <property type="project" value="InterPro"/>
</dbReference>
<dbReference type="GO" id="GO:0090543">
    <property type="term" value="C:Flemming body"/>
    <property type="evidence" value="ECO:0007669"/>
    <property type="project" value="UniProtKB-SubCell"/>
</dbReference>
<dbReference type="GO" id="GO:0005886">
    <property type="term" value="C:plasma membrane"/>
    <property type="evidence" value="ECO:0007669"/>
    <property type="project" value="UniProtKB-SubCell"/>
</dbReference>
<dbReference type="GO" id="GO:0005546">
    <property type="term" value="F:phosphatidylinositol-4,5-bisphosphate binding"/>
    <property type="evidence" value="ECO:0007669"/>
    <property type="project" value="InterPro"/>
</dbReference>
<dbReference type="GO" id="GO:0006887">
    <property type="term" value="P:exocytosis"/>
    <property type="evidence" value="ECO:0007669"/>
    <property type="project" value="UniProtKB-KW"/>
</dbReference>
<dbReference type="GO" id="GO:0015031">
    <property type="term" value="P:protein transport"/>
    <property type="evidence" value="ECO:0007669"/>
    <property type="project" value="UniProtKB-KW"/>
</dbReference>
<dbReference type="Gene3D" id="1.20.1280.170">
    <property type="entry name" value="Exocyst complex component Exo70"/>
    <property type="match status" value="2"/>
</dbReference>
<dbReference type="InterPro" id="IPR016159">
    <property type="entry name" value="Cullin_repeat-like_dom_sf"/>
</dbReference>
<dbReference type="InterPro" id="IPR004140">
    <property type="entry name" value="Exo70"/>
</dbReference>
<dbReference type="InterPro" id="IPR046364">
    <property type="entry name" value="Exo70_C"/>
</dbReference>
<dbReference type="PANTHER" id="PTHR12542:SF41">
    <property type="entry name" value="EXOCYST COMPLEX COMPONENT 7"/>
    <property type="match status" value="1"/>
</dbReference>
<dbReference type="PANTHER" id="PTHR12542">
    <property type="entry name" value="EXOCYST COMPLEX PROTEIN EXO70"/>
    <property type="match status" value="1"/>
</dbReference>
<dbReference type="Pfam" id="PF03081">
    <property type="entry name" value="Exo70_C"/>
    <property type="match status" value="1"/>
</dbReference>
<dbReference type="Pfam" id="PF20669">
    <property type="entry name" value="Exo70_N"/>
    <property type="match status" value="1"/>
</dbReference>
<dbReference type="SUPFAM" id="SSF74788">
    <property type="entry name" value="Cullin repeat-like"/>
    <property type="match status" value="1"/>
</dbReference>
<keyword id="KW-1003">Cell membrane</keyword>
<keyword id="KW-0175">Coiled coil</keyword>
<keyword id="KW-0963">Cytoplasm</keyword>
<keyword id="KW-0268">Exocytosis</keyword>
<keyword id="KW-0472">Membrane</keyword>
<keyword id="KW-0597">Phosphoprotein</keyword>
<keyword id="KW-0653">Protein transport</keyword>
<keyword id="KW-1185">Reference proteome</keyword>
<keyword id="KW-0813">Transport</keyword>
<sequence length="720" mass="82197">MIPTEDASARKREIEEKLKQEQETLSFIRESLEKSDQLTKGMVSILSSFESRLMQLENSIIPVHKQTENLQRLQENVDKTLSNMDHVISYYHVAKDTDKIIREGPAGRLYEYLACIAKIQKAVEYFQDNNPDSPELNTVKARFEKGKELLEAEFRSLLTRYSKPVPPVLILDAIGGDEDMEVQEEVTLEHLPEAVLQDIICISAWLVEYGRNQDFMNVYFQVRSSQLDRSIKGLKEHFRKNSATSAIHSPAVQTKRKETPTKKAPKRPVYIPGTIRKAQNLLKQYSQHGLDGKKGSNLTPLEGFEHDLRGVKHLSDEKHGATAGKDDVLDIEIDSYIHCISAFVKLAQSEYALLTEIIPEHHQKKTFDSLIQEALDNLMLEGDNIVSAARRAIMRHDYSAVLTIFPILRHLKQTKPDFDATLQGTAASTKNKLPALITSMETIGAKALEEFADSIKNDPDKEYNMPKDGTVHELTSNAILFLQQLLDFQETAGAMLASQVLGDTYNIPLDPRESSSSASSYSSEFSRKLLSTYIYKVLGNLQLNLSNKAKVYEDPALRAIFLHNNYNYILKSLEKSELIQLVAVTVKKVESSYRELIEQEIQNYQRSWLRVTEHLAERNIPDFQPGAKLKDKERQIIKDKFKGFNDGLEELCKIQKGWAVPDKEQRDTIRHAQKRVVSLTYKAFLQRCANISFTKNPEKYHRYSPEQVEDMIDRLFDTSA</sequence>
<gene>
    <name type="primary">exoc7</name>
</gene>
<reference key="1">
    <citation type="journal article" date="2013" name="Nature">
        <title>The zebrafish reference genome sequence and its relationship to the human genome.</title>
        <authorList>
            <person name="Howe K."/>
            <person name="Clark M.D."/>
            <person name="Torroja C.F."/>
            <person name="Torrance J."/>
            <person name="Berthelot C."/>
            <person name="Muffato M."/>
            <person name="Collins J.E."/>
            <person name="Humphray S."/>
            <person name="McLaren K."/>
            <person name="Matthews L."/>
            <person name="McLaren S."/>
            <person name="Sealy I."/>
            <person name="Caccamo M."/>
            <person name="Churcher C."/>
            <person name="Scott C."/>
            <person name="Barrett J.C."/>
            <person name="Koch R."/>
            <person name="Rauch G.J."/>
            <person name="White S."/>
            <person name="Chow W."/>
            <person name="Kilian B."/>
            <person name="Quintais L.T."/>
            <person name="Guerra-Assuncao J.A."/>
            <person name="Zhou Y."/>
            <person name="Gu Y."/>
            <person name="Yen J."/>
            <person name="Vogel J.H."/>
            <person name="Eyre T."/>
            <person name="Redmond S."/>
            <person name="Banerjee R."/>
            <person name="Chi J."/>
            <person name="Fu B."/>
            <person name="Langley E."/>
            <person name="Maguire S.F."/>
            <person name="Laird G.K."/>
            <person name="Lloyd D."/>
            <person name="Kenyon E."/>
            <person name="Donaldson S."/>
            <person name="Sehra H."/>
            <person name="Almeida-King J."/>
            <person name="Loveland J."/>
            <person name="Trevanion S."/>
            <person name="Jones M."/>
            <person name="Quail M."/>
            <person name="Willey D."/>
            <person name="Hunt A."/>
            <person name="Burton J."/>
            <person name="Sims S."/>
            <person name="McLay K."/>
            <person name="Plumb B."/>
            <person name="Davis J."/>
            <person name="Clee C."/>
            <person name="Oliver K."/>
            <person name="Clark R."/>
            <person name="Riddle C."/>
            <person name="Elliot D."/>
            <person name="Threadgold G."/>
            <person name="Harden G."/>
            <person name="Ware D."/>
            <person name="Begum S."/>
            <person name="Mortimore B."/>
            <person name="Kerry G."/>
            <person name="Heath P."/>
            <person name="Phillimore B."/>
            <person name="Tracey A."/>
            <person name="Corby N."/>
            <person name="Dunn M."/>
            <person name="Johnson C."/>
            <person name="Wood J."/>
            <person name="Clark S."/>
            <person name="Pelan S."/>
            <person name="Griffiths G."/>
            <person name="Smith M."/>
            <person name="Glithero R."/>
            <person name="Howden P."/>
            <person name="Barker N."/>
            <person name="Lloyd C."/>
            <person name="Stevens C."/>
            <person name="Harley J."/>
            <person name="Holt K."/>
            <person name="Panagiotidis G."/>
            <person name="Lovell J."/>
            <person name="Beasley H."/>
            <person name="Henderson C."/>
            <person name="Gordon D."/>
            <person name="Auger K."/>
            <person name="Wright D."/>
            <person name="Collins J."/>
            <person name="Raisen C."/>
            <person name="Dyer L."/>
            <person name="Leung K."/>
            <person name="Robertson L."/>
            <person name="Ambridge K."/>
            <person name="Leongamornlert D."/>
            <person name="McGuire S."/>
            <person name="Gilderthorp R."/>
            <person name="Griffiths C."/>
            <person name="Manthravadi D."/>
            <person name="Nichol S."/>
            <person name="Barker G."/>
            <person name="Whitehead S."/>
            <person name="Kay M."/>
            <person name="Brown J."/>
            <person name="Murnane C."/>
            <person name="Gray E."/>
            <person name="Humphries M."/>
            <person name="Sycamore N."/>
            <person name="Barker D."/>
            <person name="Saunders D."/>
            <person name="Wallis J."/>
            <person name="Babbage A."/>
            <person name="Hammond S."/>
            <person name="Mashreghi-Mohammadi M."/>
            <person name="Barr L."/>
            <person name="Martin S."/>
            <person name="Wray P."/>
            <person name="Ellington A."/>
            <person name="Matthews N."/>
            <person name="Ellwood M."/>
            <person name="Woodmansey R."/>
            <person name="Clark G."/>
            <person name="Cooper J."/>
            <person name="Tromans A."/>
            <person name="Grafham D."/>
            <person name="Skuce C."/>
            <person name="Pandian R."/>
            <person name="Andrews R."/>
            <person name="Harrison E."/>
            <person name="Kimberley A."/>
            <person name="Garnett J."/>
            <person name="Fosker N."/>
            <person name="Hall R."/>
            <person name="Garner P."/>
            <person name="Kelly D."/>
            <person name="Bird C."/>
            <person name="Palmer S."/>
            <person name="Gehring I."/>
            <person name="Berger A."/>
            <person name="Dooley C.M."/>
            <person name="Ersan-Urun Z."/>
            <person name="Eser C."/>
            <person name="Geiger H."/>
            <person name="Geisler M."/>
            <person name="Karotki L."/>
            <person name="Kirn A."/>
            <person name="Konantz J."/>
            <person name="Konantz M."/>
            <person name="Oberlander M."/>
            <person name="Rudolph-Geiger S."/>
            <person name="Teucke M."/>
            <person name="Lanz C."/>
            <person name="Raddatz G."/>
            <person name="Osoegawa K."/>
            <person name="Zhu B."/>
            <person name="Rapp A."/>
            <person name="Widaa S."/>
            <person name="Langford C."/>
            <person name="Yang F."/>
            <person name="Schuster S.C."/>
            <person name="Carter N.P."/>
            <person name="Harrow J."/>
            <person name="Ning Z."/>
            <person name="Herrero J."/>
            <person name="Searle S.M."/>
            <person name="Enright A."/>
            <person name="Geisler R."/>
            <person name="Plasterk R.H."/>
            <person name="Lee C."/>
            <person name="Westerfield M."/>
            <person name="de Jong P.J."/>
            <person name="Zon L.I."/>
            <person name="Postlethwait J.H."/>
            <person name="Nusslein-Volhard C."/>
            <person name="Hubbard T.J."/>
            <person name="Roest Crollius H."/>
            <person name="Rogers J."/>
            <person name="Stemple D.L."/>
        </authorList>
    </citation>
    <scope>NUCLEOTIDE SEQUENCE [LARGE SCALE GENOMIC DNA]</scope>
    <source>
        <strain>Tuebingen</strain>
    </source>
</reference>
<reference key="2">
    <citation type="journal article" date="2020" name="Genet. Med.">
        <title>Regulation of human cerebral cortical development by EXOC7 and EXOC8, components of the exocyst complex, and roles in neural progenitor cell proliferation and survival.</title>
        <authorList>
            <person name="Coulter M.E."/>
            <person name="Musaev D."/>
            <person name="DeGennaro E.M."/>
            <person name="Zhang X."/>
            <person name="Henke K."/>
            <person name="James K.N."/>
            <person name="Smith R.S."/>
            <person name="Hill R.S."/>
            <person name="Partlow J.N."/>
            <person name="Al-Saffar M."/>
            <person name="Kamumbu A.S."/>
            <person name="Hatem N."/>
            <person name="Barkovich A.J."/>
            <person name="Aziza J."/>
            <person name="Chassaing N."/>
            <person name="Zaki M.S."/>
            <person name="Sultan T."/>
            <person name="Burglen L."/>
            <person name="Rajab A."/>
            <person name="Al-Gazali L."/>
            <person name="Mochida G.H."/>
            <person name="Harris M.P."/>
            <person name="Gleeson J.G."/>
            <person name="Walsh C.A."/>
        </authorList>
    </citation>
    <scope>FUNCTION</scope>
</reference>
<organism>
    <name type="scientific">Danio rerio</name>
    <name type="common">Zebrafish</name>
    <name type="synonym">Brachydanio rerio</name>
    <dbReference type="NCBI Taxonomy" id="7955"/>
    <lineage>
        <taxon>Eukaryota</taxon>
        <taxon>Metazoa</taxon>
        <taxon>Chordata</taxon>
        <taxon>Craniata</taxon>
        <taxon>Vertebrata</taxon>
        <taxon>Euteleostomi</taxon>
        <taxon>Actinopterygii</taxon>
        <taxon>Neopterygii</taxon>
        <taxon>Teleostei</taxon>
        <taxon>Ostariophysi</taxon>
        <taxon>Cypriniformes</taxon>
        <taxon>Danionidae</taxon>
        <taxon>Danioninae</taxon>
        <taxon>Danio</taxon>
    </lineage>
</organism>
<protein>
    <recommendedName>
        <fullName>Exocyst complex component 7</fullName>
    </recommendedName>
</protein>
<accession>E7FC72</accession>